<feature type="chain" id="PRO_0000448295" description="Na(+)/H(+) exchange regulatory cofactor-like protein nrfl-1">
    <location>
        <begin position="1"/>
        <end position="467"/>
    </location>
</feature>
<feature type="domain" description="PDZ 1" evidence="2">
    <location>
        <begin position="12"/>
        <end position="94"/>
    </location>
</feature>
<feature type="domain" description="PDZ 2" evidence="2">
    <location>
        <begin position="143"/>
        <end position="225"/>
    </location>
</feature>
<feature type="region of interest" description="Disordered" evidence="3">
    <location>
        <begin position="344"/>
        <end position="429"/>
    </location>
</feature>
<feature type="compositionally biased region" description="Polar residues" evidence="3">
    <location>
        <begin position="407"/>
        <end position="425"/>
    </location>
</feature>
<feature type="splice variant" id="VSP_060379" description="In isoform e and isoform j." evidence="6">
    <location>
        <begin position="1"/>
        <end position="136"/>
    </location>
</feature>
<feature type="splice variant" id="VSP_060380" description="In isoform b." evidence="6">
    <original>MVHIPSDVTPPRLCVVEKLNGENEYGYNLHAEKGRGQFVGTVDPDSPAERGGLITGDRIFAVNGHSIIGENHKKVVERIKANPNRCEMLVISEEGAKWYNENNVQITLDLPNIERVSPM</original>
    <variation>MDRNPSEPERIDWKNPITWISYLYTSFVYYLWLISSHLPHLPQPQRITDDKSTEQITRDAGIPRTEIVTRGDATQTVRQVAGLGDPAPKDSSLLPPSSSFVYCNNCLTPHSSQRTCSPAYVSTLSRQKSLTLLKKLKKPSSSASSTTTTTSSTVSFRAPSRASSTISDASTIRPSELIAIVPSGSHVLLRVPKLDWKTESIRIKRTRMSDWMDAEQRDVMRQFDEVIRSEEEDERTSRKRNGIFKDGSVRSIESLESRSR</variation>
    <location>
        <begin position="1"/>
        <end position="119"/>
    </location>
</feature>
<feature type="splice variant" id="VSP_060381" description="In isoform f." evidence="6">
    <original>MVHIPSDVTPPRLCVVEKLNGENEYGYNLHAEKGRGQFVGTVDPDSPAERGGLITGDRIFAVNGHSIIGENHKKVVERIKANPNRCEMLVISEEGAKWYNENNVQITLDLPNIERVSPM</original>
    <variation>MHFIDK</variation>
    <location>
        <begin position="1"/>
        <end position="119"/>
    </location>
</feature>
<feature type="splice variant" id="VSP_060382" description="In isoform g." evidence="6">
    <original>MVHIPSDVTPPRLCVVEKLNGENEYGYNLHAEKGRGQFVGTVDPDSPAERGGLITGDRIFAVNGHSIIGENHKKVVERIKANPNRCEMLVISEEGAKWYNENNVQITLDLPNIERVSPM</original>
    <variation>MRRNFCSLLIQGCSKSCK</variation>
    <location>
        <begin position="1"/>
        <end position="119"/>
    </location>
</feature>
<feature type="splice variant" id="VSP_060383" description="In isoform c, isoform d and isoform h." evidence="6">
    <original>M</original>
    <variation>MRNSCHPSNNSPPPSSWYAPTSYSQ</variation>
    <location>
        <position position="119"/>
    </location>
</feature>
<feature type="splice variant" id="VSP_060384" description="In isoform c, isoform i and isoform j." evidence="6">
    <location>
        <begin position="311"/>
        <end position="378"/>
    </location>
</feature>
<feature type="splice variant" id="VSP_060385" description="In isoform d." evidence="6">
    <original>ESSTAYDAYATPPVDSNDLMDEVFGRVNLPGVTMSSHTEVLPPTDDISSVSSLSSHRESAVDVPVSHQ</original>
    <variation>VSQNNENYGDNQTIVITTCSFLK</variation>
    <location>
        <begin position="311"/>
        <end position="378"/>
    </location>
</feature>
<feature type="mutagenesis site" description="Does not impair binding to aat-6. Abolishes binding to aat-6; when associated with A-154 and A-155." evidence="4">
    <original>GY</original>
    <variation>AA</variation>
    <location>
        <begin position="26"/>
        <end position="27"/>
    </location>
</feature>
<feature type="mutagenesis site" description="Highly reduces binding to aat-6. Abolishes binding to aat-6; when associated with A-26 and A-27." evidence="4">
    <original>EF</original>
    <variation>AA</variation>
    <location>
        <begin position="154"/>
        <end position="155"/>
    </location>
</feature>
<reference evidence="7" key="1">
    <citation type="journal article" date="1998" name="Science">
        <title>Genome sequence of the nematode C. elegans: a platform for investigating biology.</title>
        <authorList>
            <consortium name="The C. elegans sequencing consortium"/>
        </authorList>
    </citation>
    <scope>NUCLEOTIDE SEQUENCE [LARGE SCALE GENOMIC DNA]</scope>
    <source>
        <strain evidence="7">Bristol N2</strain>
    </source>
</reference>
<reference evidence="6" key="2">
    <citation type="journal article" date="2012" name="PLoS ONE">
        <title>NRFL-1, the C. elegans NHERF orthologue, interacts with amino acid transporter 6 (AAT-6) for age-dependent maintenance of AAT-6 on the membrane.</title>
        <authorList>
            <person name="Hagiwara K."/>
            <person name="Nagamori S."/>
            <person name="Umemura Y.M."/>
            <person name="Ohgaki R."/>
            <person name="Tanaka H."/>
            <person name="Murata D."/>
            <person name="Nakagomi S."/>
            <person name="Nomura K.H."/>
            <person name="Kage-Nakadai E."/>
            <person name="Mitani S."/>
            <person name="Nomura K."/>
            <person name="Kanai Y."/>
        </authorList>
    </citation>
    <scope>FUNCTION</scope>
    <scope>INTERACTION WITH AAT-6</scope>
    <scope>SUBCELLULAR LOCATION</scope>
    <scope>TISSUE SPECIFICITY</scope>
    <scope>DEVELOPMENTAL STAGE</scope>
    <scope>DOMAIN</scope>
    <scope>PHOSPHORYLATION</scope>
    <scope>DISRUPTION PHENOTYPE</scope>
    <scope>MUTAGENESIS OF 26-GLY-TYR-27 AND 154-GLU-PHE-155</scope>
</reference>
<reference evidence="6" key="3">
    <citation type="journal article" date="2018" name="Front. Mol. Biosci.">
        <title>The Reproduction Rate of Peptide Transporter PEPT-1 Deficient C. elegans Is Dependent on Dietary Glutamate Supply.</title>
        <authorList>
            <person name="Spanier B."/>
            <person name="Wallwitz J."/>
            <person name="Zapoglou D."/>
            <person name="Idrissou B.M.G."/>
            <person name="Fischer C."/>
            <person name="Troll M."/>
            <person name="Petzold K."/>
            <person name="Daniel H."/>
        </authorList>
    </citation>
    <scope>FUNCTION</scope>
    <scope>DISRUPTION PHENOTYPE</scope>
</reference>
<comment type="function">
    <text evidence="1 4 5">Scaffold protein that connects plasma membrane proteins with members of the ezrin/moesin/radixin family and thereby helps to link them to the actin cytoskeleton and to regulate their surface expression (By similarity). Anchors the amino acid transporter protein aat-6 to the apical cell membrane of intestinal cells, particularly in older animals, in order to maintain amino acid homeostasis (PubMed:22916205). May play a role in promoting fertility (PubMed:30560135).</text>
</comment>
<comment type="subunit">
    <text evidence="4">Interacts (via PDZ 2 domain) with aat-6 (via PDZ-binding motif); the interaction sequesters aat-6 to the apical cell membrane of intestinal cells.</text>
</comment>
<comment type="interaction">
    <interactant intactId="EBI-313674">
        <id>G5EDM4</id>
    </interactant>
    <interactant intactId="EBI-313664">
        <id>G5EBK3</id>
        <label>erm-1</label>
    </interactant>
    <organismsDiffer>false</organismsDiffer>
    <experiments>2</experiments>
</comment>
<comment type="interaction">
    <interactant intactId="EBI-25423624">
        <id>G5EDM4-1</id>
    </interactant>
    <interactant intactId="EBI-21449230">
        <id>Q22397</id>
        <label>aat-6</label>
    </interactant>
    <organismsDiffer>false</organismsDiffer>
    <experiments>2</experiments>
</comment>
<comment type="subcellular location">
    <subcellularLocation>
        <location evidence="4">Cell projection</location>
        <location evidence="4">Microvillus membrane</location>
    </subcellularLocation>
    <subcellularLocation>
        <location evidence="4">Apical cell membrane</location>
    </subcellularLocation>
    <text evidence="4">Co-localizes with aat-6 at the apical cell membrane of intestinal cells.</text>
</comment>
<comment type="alternative products">
    <event type="alternative splicing"/>
    <isoform>
        <id>G5EDM4-1</id>
        <name evidence="8">a</name>
        <sequence type="displayed"/>
    </isoform>
    <isoform>
        <id>G5EDM4-2</id>
        <name evidence="9">b</name>
        <sequence type="described" ref="VSP_060380"/>
    </isoform>
    <isoform>
        <id>G5EDM4-3</id>
        <name evidence="10">c</name>
        <sequence type="described" ref="VSP_060383 VSP_060384"/>
    </isoform>
    <isoform>
        <id>G5EDM4-4</id>
        <name evidence="11">d</name>
        <sequence type="described" ref="VSP_060383 VSP_060385"/>
    </isoform>
    <isoform>
        <id>G5EDM4-5</id>
        <name evidence="12">e</name>
        <sequence type="described" ref="VSP_060379"/>
    </isoform>
    <isoform>
        <id>G5EDM4-6</id>
        <name evidence="13">f</name>
        <sequence type="described" ref="VSP_060381"/>
    </isoform>
    <isoform>
        <id>G5EDM4-7</id>
        <name evidence="14">g</name>
        <sequence type="described" ref="VSP_060382"/>
    </isoform>
    <isoform>
        <id>G5EDM4-8</id>
        <name evidence="15">h</name>
        <sequence type="described" ref="VSP_060383"/>
    </isoform>
    <isoform>
        <id>G5EDM4-9</id>
        <name evidence="16">i</name>
        <sequence type="described" ref="VSP_060384"/>
    </isoform>
    <isoform>
        <id>G5EDM4-10</id>
        <name evidence="17">j</name>
        <sequence type="described" ref="VSP_060379 VSP_060384"/>
    </isoform>
</comment>
<comment type="tissue specificity">
    <text evidence="4">Expressed in the excretory canal and intestine (PubMed:22916205). Expressed on the apical cell membrane of intestinal cells (at protein level) (PubMed:22916205).</text>
</comment>
<comment type="developmental stage">
    <text evidence="4">Expressed in larval and adult stages.</text>
</comment>
<comment type="domain">
    <text evidence="4">The PDZ 2 domain is required for the interaction with the amino acid transporter protein aat-6.</text>
</comment>
<comment type="PTM">
    <text evidence="4">Phosphorylated.</text>
</comment>
<comment type="disruption phenotype">
    <text evidence="4 5">Viable, with no gross anatomy or growth defects observed (PubMed:22916205). Localization of aat-6 at the intestinal apical cell membrane diminishes as animals age, and eventually aat-6 becomes diffusely dispersed in the cytoplasm (PubMed:22916205). RNAi-mediated knockdown in a pept-1 (lg601) mutant background results in a reduced number of progeny (PubMed:30560135).</text>
</comment>
<organism evidence="7">
    <name type="scientific">Caenorhabditis elegans</name>
    <dbReference type="NCBI Taxonomy" id="6239"/>
    <lineage>
        <taxon>Eukaryota</taxon>
        <taxon>Metazoa</taxon>
        <taxon>Ecdysozoa</taxon>
        <taxon>Nematoda</taxon>
        <taxon>Chromadorea</taxon>
        <taxon>Rhabditida</taxon>
        <taxon>Rhabditina</taxon>
        <taxon>Rhabditomorpha</taxon>
        <taxon>Rhabditoidea</taxon>
        <taxon>Rhabditidae</taxon>
        <taxon>Peloderinae</taxon>
        <taxon>Caenorhabditis</taxon>
    </lineage>
</organism>
<evidence type="ECO:0000250" key="1">
    <source>
        <dbReference type="UniProtKB" id="O14745"/>
    </source>
</evidence>
<evidence type="ECO:0000255" key="2">
    <source>
        <dbReference type="PROSITE-ProRule" id="PRU00143"/>
    </source>
</evidence>
<evidence type="ECO:0000256" key="3">
    <source>
        <dbReference type="SAM" id="MobiDB-lite"/>
    </source>
</evidence>
<evidence type="ECO:0000269" key="4">
    <source>
    </source>
</evidence>
<evidence type="ECO:0000269" key="5">
    <source>
    </source>
</evidence>
<evidence type="ECO:0000305" key="6"/>
<evidence type="ECO:0000312" key="7">
    <source>
        <dbReference type="Proteomes" id="UP000001940"/>
    </source>
</evidence>
<evidence type="ECO:0000312" key="8">
    <source>
        <dbReference type="WormBase" id="C01F6.6a"/>
    </source>
</evidence>
<evidence type="ECO:0000312" key="9">
    <source>
        <dbReference type="WormBase" id="C01F6.6b"/>
    </source>
</evidence>
<evidence type="ECO:0000312" key="10">
    <source>
        <dbReference type="WormBase" id="C01F6.6c"/>
    </source>
</evidence>
<evidence type="ECO:0000312" key="11">
    <source>
        <dbReference type="WormBase" id="C01F6.6d"/>
    </source>
</evidence>
<evidence type="ECO:0000312" key="12">
    <source>
        <dbReference type="WormBase" id="C01F6.6e"/>
    </source>
</evidence>
<evidence type="ECO:0000312" key="13">
    <source>
        <dbReference type="WormBase" id="C01F6.6f"/>
    </source>
</evidence>
<evidence type="ECO:0000312" key="14">
    <source>
        <dbReference type="WormBase" id="C01F6.6g"/>
    </source>
</evidence>
<evidence type="ECO:0000312" key="15">
    <source>
        <dbReference type="WormBase" id="C01F6.6h"/>
    </source>
</evidence>
<evidence type="ECO:0000312" key="16">
    <source>
        <dbReference type="WormBase" id="C01F6.6i"/>
    </source>
</evidence>
<evidence type="ECO:0000312" key="17">
    <source>
        <dbReference type="WormBase" id="C01F6.6j"/>
    </source>
</evidence>
<protein>
    <recommendedName>
        <fullName evidence="6">Na(+)/H(+) exchange regulatory cofactor-like protein nrfl-1</fullName>
        <shortName evidence="6">NHERF-1</shortName>
    </recommendedName>
    <alternativeName>
        <fullName evidence="6">Regulatory cofactor of Na(+)/H(+) exchanger</fullName>
    </alternativeName>
    <alternativeName>
        <fullName evidence="6">Sodium-hydrogen exchanger regulatory factor 1</fullName>
    </alternativeName>
</protein>
<gene>
    <name evidence="8" type="primary">nrfl-1</name>
    <name evidence="8" type="synonym">mpz-2</name>
    <name evidence="8" type="synonym">tag-60</name>
    <name evidence="8" type="ORF">C01F6.6</name>
</gene>
<dbReference type="EMBL" id="BX284604">
    <property type="protein sequence ID" value="CAA92439.3"/>
    <property type="molecule type" value="Genomic_DNA"/>
</dbReference>
<dbReference type="EMBL" id="BX284604">
    <property type="protein sequence ID" value="CAD37352.1"/>
    <property type="molecule type" value="Genomic_DNA"/>
</dbReference>
<dbReference type="EMBL" id="BX284604">
    <property type="protein sequence ID" value="CAJ80811.1"/>
    <property type="molecule type" value="Genomic_DNA"/>
</dbReference>
<dbReference type="EMBL" id="BX284604">
    <property type="protein sequence ID" value="CAJ80816.1"/>
    <property type="molecule type" value="Genomic_DNA"/>
</dbReference>
<dbReference type="EMBL" id="BX284604">
    <property type="protein sequence ID" value="CAJ80817.1"/>
    <property type="molecule type" value="Genomic_DNA"/>
</dbReference>
<dbReference type="EMBL" id="BX284604">
    <property type="protein sequence ID" value="CCH63894.1"/>
    <property type="molecule type" value="Genomic_DNA"/>
</dbReference>
<dbReference type="EMBL" id="BX284604">
    <property type="protein sequence ID" value="CCH63914.1"/>
    <property type="molecule type" value="Genomic_DNA"/>
</dbReference>
<dbReference type="EMBL" id="BX284604">
    <property type="protein sequence ID" value="CDO41140.1"/>
    <property type="molecule type" value="Genomic_DNA"/>
</dbReference>
<dbReference type="EMBL" id="BX284604">
    <property type="protein sequence ID" value="CDO41141.1"/>
    <property type="molecule type" value="Genomic_DNA"/>
</dbReference>
<dbReference type="EMBL" id="BX284604">
    <property type="protein sequence ID" value="CDO50111.1"/>
    <property type="molecule type" value="Genomic_DNA"/>
</dbReference>
<dbReference type="PIR" id="T18808">
    <property type="entry name" value="T18808"/>
</dbReference>
<dbReference type="PIR" id="T21299">
    <property type="entry name" value="T21299"/>
</dbReference>
<dbReference type="RefSeq" id="NP_001040908.1">
    <molecule id="G5EDM4-3"/>
    <property type="nucleotide sequence ID" value="NM_001047443.5"/>
</dbReference>
<dbReference type="RefSeq" id="NP_001040909.1">
    <molecule id="G5EDM4-4"/>
    <property type="nucleotide sequence ID" value="NM_001047444.7"/>
</dbReference>
<dbReference type="RefSeq" id="NP_001040910.1">
    <molecule id="G5EDM4-5"/>
    <property type="nucleotide sequence ID" value="NM_001047445.6"/>
</dbReference>
<dbReference type="RefSeq" id="NP_001263761.1">
    <molecule id="G5EDM4-6"/>
    <property type="nucleotide sequence ID" value="NM_001276832.5"/>
</dbReference>
<dbReference type="RefSeq" id="NP_001263762.1">
    <molecule id="G5EDM4-7"/>
    <property type="nucleotide sequence ID" value="NM_001276833.3"/>
</dbReference>
<dbReference type="RefSeq" id="NP_001294067.1">
    <property type="nucleotide sequence ID" value="NM_001307138.1"/>
</dbReference>
<dbReference type="RefSeq" id="NP_001294068.1">
    <molecule id="G5EDM4-9"/>
    <property type="nucleotide sequence ID" value="NM_001307139.3"/>
</dbReference>
<dbReference type="RefSeq" id="NP_001294128.1">
    <property type="nucleotide sequence ID" value="NM_001307199.1"/>
</dbReference>
<dbReference type="RefSeq" id="NP_001368467.1">
    <molecule id="G5EDM4-10"/>
    <property type="nucleotide sequence ID" value="NM_001380397.1"/>
</dbReference>
<dbReference type="RefSeq" id="NP_001380170.1">
    <molecule id="G5EDM4-8"/>
    <property type="nucleotide sequence ID" value="NM_001392363.1"/>
</dbReference>
<dbReference type="RefSeq" id="NP_741478.1">
    <molecule id="G5EDM4-1"/>
    <property type="nucleotide sequence ID" value="NM_171410.5"/>
</dbReference>
<dbReference type="RefSeq" id="NP_741479.1">
    <molecule id="G5EDM4-2"/>
    <property type="nucleotide sequence ID" value="NM_171411.7"/>
</dbReference>
<dbReference type="SMR" id="G5EDM4"/>
<dbReference type="ComplexPortal" id="CPX-4311">
    <property type="entry name" value="nrfl-1-aat-6 complex"/>
</dbReference>
<dbReference type="FunCoup" id="G5EDM4">
    <property type="interactions" value="192"/>
</dbReference>
<dbReference type="IntAct" id="G5EDM4">
    <property type="interactions" value="10"/>
</dbReference>
<dbReference type="STRING" id="6239.C01F6.6b.1"/>
<dbReference type="PaxDb" id="6239-C01F6.6b"/>
<dbReference type="PeptideAtlas" id="G5EDM4"/>
<dbReference type="EnsemblMetazoa" id="C01F6.6a.1">
    <molecule id="G5EDM4-1"/>
    <property type="protein sequence ID" value="C01F6.6a.1"/>
    <property type="gene ID" value="WBGene00006438"/>
</dbReference>
<dbReference type="EnsemblMetazoa" id="C01F6.6b.1">
    <molecule id="G5EDM4-2"/>
    <property type="protein sequence ID" value="C01F6.6b.1"/>
    <property type="gene ID" value="WBGene00006438"/>
</dbReference>
<dbReference type="EnsemblMetazoa" id="C01F6.6c.1">
    <molecule id="G5EDM4-3"/>
    <property type="protein sequence ID" value="C01F6.6c.1"/>
    <property type="gene ID" value="WBGene00006438"/>
</dbReference>
<dbReference type="EnsemblMetazoa" id="C01F6.6d.1">
    <molecule id="G5EDM4-4"/>
    <property type="protein sequence ID" value="C01F6.6d.1"/>
    <property type="gene ID" value="WBGene00006438"/>
</dbReference>
<dbReference type="EnsemblMetazoa" id="C01F6.6e.1">
    <molecule id="G5EDM4-5"/>
    <property type="protein sequence ID" value="C01F6.6e.1"/>
    <property type="gene ID" value="WBGene00006438"/>
</dbReference>
<dbReference type="EnsemblMetazoa" id="C01F6.6f.1">
    <molecule id="G5EDM4-6"/>
    <property type="protein sequence ID" value="C01F6.6f.1"/>
    <property type="gene ID" value="WBGene00006438"/>
</dbReference>
<dbReference type="EnsemblMetazoa" id="C01F6.6g.1">
    <molecule id="G5EDM4-7"/>
    <property type="protein sequence ID" value="C01F6.6g.1"/>
    <property type="gene ID" value="WBGene00006438"/>
</dbReference>
<dbReference type="EnsemblMetazoa" id="C01F6.6h.1">
    <molecule id="G5EDM4-8"/>
    <property type="protein sequence ID" value="C01F6.6h.1"/>
    <property type="gene ID" value="WBGene00006438"/>
</dbReference>
<dbReference type="EnsemblMetazoa" id="C01F6.6i.1">
    <molecule id="G5EDM4-9"/>
    <property type="protein sequence ID" value="C01F6.6i.1"/>
    <property type="gene ID" value="WBGene00006438"/>
</dbReference>
<dbReference type="EnsemblMetazoa" id="C01F6.6j.1">
    <molecule id="G5EDM4-10"/>
    <property type="protein sequence ID" value="C01F6.6j.1"/>
    <property type="gene ID" value="WBGene00006438"/>
</dbReference>
<dbReference type="GeneID" id="177736"/>
<dbReference type="KEGG" id="cel:CELE_C01F6.6"/>
<dbReference type="UCSC" id="C01F6.6a">
    <property type="organism name" value="c. elegans"/>
</dbReference>
<dbReference type="AGR" id="WB:WBGene00006438"/>
<dbReference type="CTD" id="177736"/>
<dbReference type="WormBase" id="C01F6.6a">
    <molecule id="G5EDM4-1"/>
    <property type="protein sequence ID" value="CE30847"/>
    <property type="gene ID" value="WBGene00006438"/>
    <property type="gene designation" value="nrfl-1"/>
</dbReference>
<dbReference type="WormBase" id="C01F6.6b">
    <molecule id="G5EDM4-2"/>
    <property type="protein sequence ID" value="CE30848"/>
    <property type="gene ID" value="WBGene00006438"/>
    <property type="gene designation" value="nrfl-1"/>
</dbReference>
<dbReference type="WormBase" id="C01F6.6c">
    <molecule id="G5EDM4-3"/>
    <property type="protein sequence ID" value="CE39888"/>
    <property type="gene ID" value="WBGene00006438"/>
    <property type="gene designation" value="nrfl-1"/>
</dbReference>
<dbReference type="WormBase" id="C01F6.6d">
    <molecule id="G5EDM4-4"/>
    <property type="protein sequence ID" value="CE39889"/>
    <property type="gene ID" value="WBGene00006438"/>
    <property type="gene designation" value="nrfl-1"/>
</dbReference>
<dbReference type="WormBase" id="C01F6.6e">
    <molecule id="G5EDM4-5"/>
    <property type="protein sequence ID" value="CE39890"/>
    <property type="gene ID" value="WBGene00006438"/>
    <property type="gene designation" value="nrfl-1"/>
</dbReference>
<dbReference type="WormBase" id="C01F6.6f">
    <molecule id="G5EDM4-6"/>
    <property type="protein sequence ID" value="CE47486"/>
    <property type="gene ID" value="WBGene00006438"/>
    <property type="gene designation" value="nrfl-1"/>
</dbReference>
<dbReference type="WormBase" id="C01F6.6g">
    <molecule id="G5EDM4-7"/>
    <property type="protein sequence ID" value="CE47559"/>
    <property type="gene ID" value="WBGene00006438"/>
    <property type="gene designation" value="nrfl-1"/>
</dbReference>
<dbReference type="WormBase" id="C01F6.6h">
    <molecule id="G5EDM4-8"/>
    <property type="protein sequence ID" value="CE49694"/>
    <property type="gene ID" value="WBGene00006438"/>
    <property type="gene designation" value="nrfl-1"/>
</dbReference>
<dbReference type="WormBase" id="C01F6.6i">
    <molecule id="G5EDM4-9"/>
    <property type="protein sequence ID" value="CE49735"/>
    <property type="gene ID" value="WBGene00006438"/>
    <property type="gene designation" value="nrfl-1"/>
</dbReference>
<dbReference type="WormBase" id="C01F6.6j">
    <molecule id="G5EDM4-10"/>
    <property type="protein sequence ID" value="CE49636"/>
    <property type="gene ID" value="WBGene00006438"/>
    <property type="gene designation" value="nrfl-1"/>
</dbReference>
<dbReference type="eggNOG" id="KOG3528">
    <property type="taxonomic scope" value="Eukaryota"/>
</dbReference>
<dbReference type="GeneTree" id="ENSGT00950000182849"/>
<dbReference type="HOGENOM" id="CLU_057921_0_0_1"/>
<dbReference type="InParanoid" id="G5EDM4"/>
<dbReference type="OMA" id="LEYRKCA"/>
<dbReference type="OrthoDB" id="10007415at2759"/>
<dbReference type="PRO" id="PR:G5EDM4"/>
<dbReference type="Proteomes" id="UP000001940">
    <property type="component" value="Chromosome IV"/>
</dbReference>
<dbReference type="Bgee" id="WBGene00006438">
    <property type="expression patterns" value="Expressed in pharyngeal muscle cell (C elegans) and 3 other cell types or tissues"/>
</dbReference>
<dbReference type="GO" id="GO:1990184">
    <property type="term" value="C:amino acid transport complex"/>
    <property type="evidence" value="ECO:0000303"/>
    <property type="project" value="ComplexPortal"/>
</dbReference>
<dbReference type="GO" id="GO:0016324">
    <property type="term" value="C:apical plasma membrane"/>
    <property type="evidence" value="ECO:0000314"/>
    <property type="project" value="UniProtKB"/>
</dbReference>
<dbReference type="GO" id="GO:0031528">
    <property type="term" value="C:microvillus membrane"/>
    <property type="evidence" value="ECO:0007669"/>
    <property type="project" value="UniProtKB-SubCell"/>
</dbReference>
<dbReference type="GO" id="GO:0043495">
    <property type="term" value="F:protein-membrane adaptor activity"/>
    <property type="evidence" value="ECO:0000314"/>
    <property type="project" value="UniProtKB"/>
</dbReference>
<dbReference type="GO" id="GO:0080144">
    <property type="term" value="P:intracellular amino acid homeostasis"/>
    <property type="evidence" value="ECO:0000303"/>
    <property type="project" value="ComplexPortal"/>
</dbReference>
<dbReference type="GO" id="GO:0015807">
    <property type="term" value="P:L-amino acid transport"/>
    <property type="evidence" value="ECO:0000303"/>
    <property type="project" value="ComplexPortal"/>
</dbReference>
<dbReference type="GO" id="GO:0072659">
    <property type="term" value="P:protein localization to plasma membrane"/>
    <property type="evidence" value="ECO:0000318"/>
    <property type="project" value="GO_Central"/>
</dbReference>
<dbReference type="CDD" id="cd06768">
    <property type="entry name" value="PDZ_NHERF-like"/>
    <property type="match status" value="2"/>
</dbReference>
<dbReference type="Gene3D" id="2.30.42.10">
    <property type="match status" value="2"/>
</dbReference>
<dbReference type="InterPro" id="IPR051067">
    <property type="entry name" value="NHER"/>
</dbReference>
<dbReference type="InterPro" id="IPR001478">
    <property type="entry name" value="PDZ"/>
</dbReference>
<dbReference type="InterPro" id="IPR041489">
    <property type="entry name" value="PDZ_6"/>
</dbReference>
<dbReference type="InterPro" id="IPR036034">
    <property type="entry name" value="PDZ_sf"/>
</dbReference>
<dbReference type="PANTHER" id="PTHR14191:SF3">
    <property type="entry name" value="NA(+)_H(+) EXCHANGE REGULATORY COFACTOR-LIKE PROTEIN NRFL-1"/>
    <property type="match status" value="1"/>
</dbReference>
<dbReference type="PANTHER" id="PTHR14191">
    <property type="entry name" value="PDZ DOMAIN CONTAINING PROTEIN"/>
    <property type="match status" value="1"/>
</dbReference>
<dbReference type="Pfam" id="PF17820">
    <property type="entry name" value="PDZ_6"/>
    <property type="match status" value="2"/>
</dbReference>
<dbReference type="SMART" id="SM00228">
    <property type="entry name" value="PDZ"/>
    <property type="match status" value="2"/>
</dbReference>
<dbReference type="SUPFAM" id="SSF50156">
    <property type="entry name" value="PDZ domain-like"/>
    <property type="match status" value="2"/>
</dbReference>
<dbReference type="PROSITE" id="PS50106">
    <property type="entry name" value="PDZ"/>
    <property type="match status" value="2"/>
</dbReference>
<accession>G5EDM4</accession>
<accession>G5EC64</accession>
<accession>G5EE55</accession>
<accession>G5EFP7</accession>
<accession>I2HAG6</accession>
<accession>I2HAI6</accession>
<accession>Q27GP2</accession>
<accession>X5LQ26</accession>
<accession>X5LVA5</accession>
<accession>X5MBG4</accession>
<proteinExistence type="evidence at protein level"/>
<sequence length="467" mass="52066">MVHIPSDVTPPRLCVVEKLNGENEYGYNLHAEKGRGQFVGTVDPDSPAERGGLITGDRIFAVNGHSIIGENHKKVVERIKANPNRCEMLVISEEGAKWYNENNVQITLDLPNIERVSPMSKETPVFVPPPPPPTDAMPYLPRLAELNKGTPDQEFGFNLHAERGRGHFIGTVDAGGIGEKAGLEAGQRIVGVNGQLIYPTTGHKEVVALIKKDTMKTTLLVASEDVDKYHKDHNIAYSWDNVERVDTRPVINVETHHHHEEVSVPKSNGYDVPPLNPHSIQVNEEREISKMTTTTRTETITNSNSAYQYKESSTAYDAYATPPVDSNDLMDEVFGRVNLPGVTMSSHTEVLPPTDDISSVSSLSSHRESAVDVPVSHQYVPSYATESHQKHEQHSQTHHHHHQHQQPSPLSNGSSHGYAASSTSGYDDDDIYHLSAREARERLRMKNRKHHLHEMSLNEKYQLVSNM</sequence>
<name>NHRF1_CAEEL</name>
<keyword id="KW-0025">Alternative splicing</keyword>
<keyword id="KW-1003">Cell membrane</keyword>
<keyword id="KW-0966">Cell projection</keyword>
<keyword id="KW-0472">Membrane</keyword>
<keyword id="KW-1185">Reference proteome</keyword>
<keyword id="KW-0677">Repeat</keyword>